<accession>Q2NZZ8</accession>
<name>RS14_XANOM</name>
<evidence type="ECO:0000255" key="1">
    <source>
        <dbReference type="HAMAP-Rule" id="MF_00537"/>
    </source>
</evidence>
<evidence type="ECO:0000256" key="2">
    <source>
        <dbReference type="SAM" id="MobiDB-lite"/>
    </source>
</evidence>
<evidence type="ECO:0000305" key="3"/>
<protein>
    <recommendedName>
        <fullName evidence="1">Small ribosomal subunit protein uS14</fullName>
    </recommendedName>
    <alternativeName>
        <fullName evidence="3">30S ribosomal protein S14</fullName>
    </alternativeName>
</protein>
<reference key="1">
    <citation type="journal article" date="2005" name="Jpn. Agric. Res. Q.">
        <title>Genome sequence of Xanthomonas oryzae pv. oryzae suggests contribution of large numbers of effector genes and insertion sequences to its race diversity.</title>
        <authorList>
            <person name="Ochiai H."/>
            <person name="Inoue Y."/>
            <person name="Takeya M."/>
            <person name="Sasaki A."/>
            <person name="Kaku H."/>
        </authorList>
    </citation>
    <scope>NUCLEOTIDE SEQUENCE [LARGE SCALE GENOMIC DNA]</scope>
    <source>
        <strain>MAFF 311018</strain>
    </source>
</reference>
<gene>
    <name evidence="1" type="primary">rpsN</name>
    <name type="ordered locus">XOO3374</name>
</gene>
<sequence length="101" mass="11499">MAKTSMIHRDIKRAKLAKKFAGKRDALKKILSSQDASYEEKIDASTKLQKLPRDSSPSRHRNRCELSGRPRGVYRKFGLGRNMLRKATMNGDVPGLRKASW</sequence>
<proteinExistence type="inferred from homology"/>
<dbReference type="EMBL" id="AP008229">
    <property type="protein sequence ID" value="BAE70129.1"/>
    <property type="molecule type" value="Genomic_DNA"/>
</dbReference>
<dbReference type="RefSeq" id="WP_005917137.1">
    <property type="nucleotide sequence ID" value="NC_007705.1"/>
</dbReference>
<dbReference type="SMR" id="Q2NZZ8"/>
<dbReference type="GeneID" id="97210517"/>
<dbReference type="KEGG" id="xom:XOO3374"/>
<dbReference type="HOGENOM" id="CLU_139869_0_1_6"/>
<dbReference type="GO" id="GO:0005737">
    <property type="term" value="C:cytoplasm"/>
    <property type="evidence" value="ECO:0007669"/>
    <property type="project" value="UniProtKB-ARBA"/>
</dbReference>
<dbReference type="GO" id="GO:0015935">
    <property type="term" value="C:small ribosomal subunit"/>
    <property type="evidence" value="ECO:0007669"/>
    <property type="project" value="TreeGrafter"/>
</dbReference>
<dbReference type="GO" id="GO:0019843">
    <property type="term" value="F:rRNA binding"/>
    <property type="evidence" value="ECO:0007669"/>
    <property type="project" value="UniProtKB-UniRule"/>
</dbReference>
<dbReference type="GO" id="GO:0003735">
    <property type="term" value="F:structural constituent of ribosome"/>
    <property type="evidence" value="ECO:0007669"/>
    <property type="project" value="InterPro"/>
</dbReference>
<dbReference type="GO" id="GO:0006412">
    <property type="term" value="P:translation"/>
    <property type="evidence" value="ECO:0007669"/>
    <property type="project" value="UniProtKB-UniRule"/>
</dbReference>
<dbReference type="FunFam" id="1.10.287.1480:FF:000001">
    <property type="entry name" value="30S ribosomal protein S14"/>
    <property type="match status" value="1"/>
</dbReference>
<dbReference type="Gene3D" id="1.10.287.1480">
    <property type="match status" value="1"/>
</dbReference>
<dbReference type="HAMAP" id="MF_00537">
    <property type="entry name" value="Ribosomal_uS14_1"/>
    <property type="match status" value="1"/>
</dbReference>
<dbReference type="InterPro" id="IPR001209">
    <property type="entry name" value="Ribosomal_uS14"/>
</dbReference>
<dbReference type="InterPro" id="IPR023036">
    <property type="entry name" value="Ribosomal_uS14_bac/plastid"/>
</dbReference>
<dbReference type="NCBIfam" id="NF006477">
    <property type="entry name" value="PRK08881.1"/>
    <property type="match status" value="1"/>
</dbReference>
<dbReference type="PANTHER" id="PTHR19836">
    <property type="entry name" value="30S RIBOSOMAL PROTEIN S14"/>
    <property type="match status" value="1"/>
</dbReference>
<dbReference type="PANTHER" id="PTHR19836:SF19">
    <property type="entry name" value="SMALL RIBOSOMAL SUBUNIT PROTEIN US14M"/>
    <property type="match status" value="1"/>
</dbReference>
<dbReference type="Pfam" id="PF00253">
    <property type="entry name" value="Ribosomal_S14"/>
    <property type="match status" value="1"/>
</dbReference>
<dbReference type="SUPFAM" id="SSF57716">
    <property type="entry name" value="Glucocorticoid receptor-like (DNA-binding domain)"/>
    <property type="match status" value="1"/>
</dbReference>
<feature type="chain" id="PRO_1000128643" description="Small ribosomal subunit protein uS14">
    <location>
        <begin position="1"/>
        <end position="101"/>
    </location>
</feature>
<feature type="region of interest" description="Disordered" evidence="2">
    <location>
        <begin position="33"/>
        <end position="69"/>
    </location>
</feature>
<feature type="compositionally biased region" description="Basic and acidic residues" evidence="2">
    <location>
        <begin position="51"/>
        <end position="68"/>
    </location>
</feature>
<keyword id="KW-0687">Ribonucleoprotein</keyword>
<keyword id="KW-0689">Ribosomal protein</keyword>
<keyword id="KW-0694">RNA-binding</keyword>
<keyword id="KW-0699">rRNA-binding</keyword>
<organism>
    <name type="scientific">Xanthomonas oryzae pv. oryzae (strain MAFF 311018)</name>
    <dbReference type="NCBI Taxonomy" id="342109"/>
    <lineage>
        <taxon>Bacteria</taxon>
        <taxon>Pseudomonadati</taxon>
        <taxon>Pseudomonadota</taxon>
        <taxon>Gammaproteobacteria</taxon>
        <taxon>Lysobacterales</taxon>
        <taxon>Lysobacteraceae</taxon>
        <taxon>Xanthomonas</taxon>
    </lineage>
</organism>
<comment type="function">
    <text evidence="1">Binds 16S rRNA, required for the assembly of 30S particles and may also be responsible for determining the conformation of the 16S rRNA at the A site.</text>
</comment>
<comment type="subunit">
    <text evidence="1">Part of the 30S ribosomal subunit. Contacts proteins S3 and S10.</text>
</comment>
<comment type="similarity">
    <text evidence="1">Belongs to the universal ribosomal protein uS14 family.</text>
</comment>